<gene>
    <name evidence="7 10" type="primary">che-12</name>
    <name evidence="10" type="ORF">B0024.8</name>
</gene>
<comment type="function">
    <text evidence="4 5 6">Required for normal structure and function of sensory cilia on amphid neurons, especially for the formation of distal ciliary structures, but is less important for normal assembly of middle and basal ciliary structures. Plays a role in the organization of axoneme microtubule bundles in sensory cilia. Required for normal structure and function of the ASER neuron that mediates attraction to NaCl. Required for normal chemotaxis to NaCl (PubMed:18245347, PubMed:26378256). Required for normal avoidance response to high osmolarity. In contrast, is not required for normal chemotaxis to isoamyl alcohol. Does not play a role in intraflagella transport (IFT) (PubMed:18245347). Promotes dauer formation in response to pheromones such as the ascarosides ascr#2, ascr#3, ascr#5, ascr#8 and icas#9 (PubMed:26976437).</text>
</comment>
<comment type="subcellular location">
    <subcellularLocation>
        <location evidence="4 5">Cell projection</location>
        <location evidence="4 5">Cilium</location>
    </subcellularLocation>
    <subcellularLocation>
        <location evidence="4 5">Perikaryon</location>
    </subcellularLocation>
    <subcellularLocation>
        <location evidence="4 5">Cell projection</location>
        <location evidence="4 5">Dendrite</location>
    </subcellularLocation>
    <text evidence="4 5">Detected in neuronal cell bodies, and to a lesser extent in dendrites. Detected in ASER cilia (PubMed:18245347, PubMed:26378256). Requires the intraflagella transport (IFT) machinery for normal location in cilia, but does not play a role in IFT itself (PubMed:18245347).</text>
</comment>
<comment type="alternative products">
    <event type="alternative splicing"/>
    <isoform>
        <id>Q17423-1</id>
        <name evidence="10">a</name>
        <sequence type="displayed"/>
    </isoform>
    <isoform>
        <id>Q17423-2</id>
        <name evidence="11">b</name>
        <sequence type="described" ref="VSP_058558"/>
    </isoform>
    <isoform>
        <id>Q17423-3</id>
        <name evidence="12">c</name>
        <sequence type="described" ref="VSP_058557"/>
    </isoform>
    <isoform>
        <id>Q17423-4</id>
        <name evidence="13">d</name>
        <sequence type="described" ref="VSP_058556"/>
    </isoform>
</comment>
<comment type="tissue specificity">
    <text evidence="4 5">Detected in a subset of amphid neurons that lack wing- or finger-like ciliary extensions. Likewise, detected in phasmid neurons.</text>
</comment>
<comment type="domain">
    <text evidence="1">The TOG regions are composed of HEAT-type repeats that assemble into a solenoid structure. They mediate interaction with microtubules.</text>
</comment>
<comment type="disruption phenotype">
    <text evidence="5">Impaired structure and function of sensory cilia on amphid neurons. Strongly reduced length of the sensory cilium on the ASER neuron. Contrary to wild-type cilia that display the canonical ring of nine doublet microtubule bundles surrounding central singlet microtubules in the proximal and middle part, cilia from mutant nematodes have poorly defined microtubule organization at the cilium proximal end, and no visible microtubules at their distal ends.</text>
</comment>
<comment type="similarity">
    <text evidence="8">Belongs to the Crescerin family.</text>
</comment>
<dbReference type="EMBL" id="BX284605">
    <property type="protein sequence ID" value="CAA94880.3"/>
    <property type="molecule type" value="Genomic_DNA"/>
</dbReference>
<dbReference type="EMBL" id="BX284605">
    <property type="protein sequence ID" value="CBZ01772.1"/>
    <property type="molecule type" value="Genomic_DNA"/>
</dbReference>
<dbReference type="EMBL" id="BX284605">
    <property type="protein sequence ID" value="CBZ01773.1"/>
    <property type="molecule type" value="Genomic_DNA"/>
</dbReference>
<dbReference type="EMBL" id="BX284605">
    <property type="protein sequence ID" value="CCU83323.1"/>
    <property type="molecule type" value="Genomic_DNA"/>
</dbReference>
<dbReference type="RefSeq" id="NP_001256204.1">
    <molecule id="Q17423-1"/>
    <property type="nucleotide sequence ID" value="NM_001269275.3"/>
</dbReference>
<dbReference type="RefSeq" id="NP_001256205.1">
    <molecule id="Q17423-2"/>
    <property type="nucleotide sequence ID" value="NM_001269276.3"/>
</dbReference>
<dbReference type="RefSeq" id="NP_001256206.1">
    <molecule id="Q17423-3"/>
    <property type="nucleotide sequence ID" value="NM_001269277.3"/>
</dbReference>
<dbReference type="RefSeq" id="NP_001294732.1">
    <molecule id="Q17423-4"/>
    <property type="nucleotide sequence ID" value="NM_001307803.4"/>
</dbReference>
<dbReference type="SMR" id="Q17423"/>
<dbReference type="FunCoup" id="Q17423">
    <property type="interactions" value="1596"/>
</dbReference>
<dbReference type="STRING" id="6239.B0024.8a.1"/>
<dbReference type="PaxDb" id="6239-B0024.8a"/>
<dbReference type="EnsemblMetazoa" id="B0024.8a.1">
    <molecule id="Q17423-1"/>
    <property type="protein sequence ID" value="B0024.8a.1"/>
    <property type="gene ID" value="WBGene00000491"/>
</dbReference>
<dbReference type="EnsemblMetazoa" id="B0024.8b.1">
    <molecule id="Q17423-2"/>
    <property type="protein sequence ID" value="B0024.8b.1"/>
    <property type="gene ID" value="WBGene00000491"/>
</dbReference>
<dbReference type="EnsemblMetazoa" id="B0024.8c.1">
    <molecule id="Q17423-3"/>
    <property type="protein sequence ID" value="B0024.8c.1"/>
    <property type="gene ID" value="WBGene00000491"/>
</dbReference>
<dbReference type="EnsemblMetazoa" id="B0024.8d.1">
    <molecule id="Q17423-4"/>
    <property type="protein sequence ID" value="B0024.8d.1"/>
    <property type="gene ID" value="WBGene00000491"/>
</dbReference>
<dbReference type="GeneID" id="179433"/>
<dbReference type="KEGG" id="cel:CELE_B0024.8"/>
<dbReference type="AGR" id="WB:WBGene00000491"/>
<dbReference type="CTD" id="179433"/>
<dbReference type="WormBase" id="B0024.8a">
    <molecule id="Q17423-1"/>
    <property type="protein sequence ID" value="CE42903"/>
    <property type="gene ID" value="WBGene00000491"/>
    <property type="gene designation" value="che-12"/>
</dbReference>
<dbReference type="WormBase" id="B0024.8b">
    <molecule id="Q17423-2"/>
    <property type="protein sequence ID" value="CE45799"/>
    <property type="gene ID" value="WBGene00000491"/>
    <property type="gene designation" value="che-12"/>
</dbReference>
<dbReference type="WormBase" id="B0024.8c">
    <molecule id="Q17423-3"/>
    <property type="protein sequence ID" value="CE45743"/>
    <property type="gene ID" value="WBGene00000491"/>
    <property type="gene designation" value="che-12"/>
</dbReference>
<dbReference type="WormBase" id="B0024.8d">
    <molecule id="Q17423-4"/>
    <property type="protein sequence ID" value="CE48310"/>
    <property type="gene ID" value="WBGene00000491"/>
    <property type="gene designation" value="che-12"/>
</dbReference>
<dbReference type="eggNOG" id="KOG2933">
    <property type="taxonomic scope" value="Eukaryota"/>
</dbReference>
<dbReference type="GeneTree" id="ENSGT00940000167261"/>
<dbReference type="HOGENOM" id="CLU_007936_0_0_1"/>
<dbReference type="InParanoid" id="Q17423"/>
<dbReference type="OMA" id="DELCHAT"/>
<dbReference type="OrthoDB" id="63891at2759"/>
<dbReference type="PhylomeDB" id="Q17423"/>
<dbReference type="PRO" id="PR:Q17423"/>
<dbReference type="Proteomes" id="UP000001940">
    <property type="component" value="Chromosome V"/>
</dbReference>
<dbReference type="Bgee" id="WBGene00000491">
    <property type="expression patterns" value="Expressed in pharyngeal muscle cell (C elegans) and 3 other cell types or tissues"/>
</dbReference>
<dbReference type="GO" id="GO:0005929">
    <property type="term" value="C:cilium"/>
    <property type="evidence" value="ECO:0000314"/>
    <property type="project" value="UniProtKB"/>
</dbReference>
<dbReference type="GO" id="GO:0005881">
    <property type="term" value="C:cytoplasmic microtubule"/>
    <property type="evidence" value="ECO:0000318"/>
    <property type="project" value="GO_Central"/>
</dbReference>
<dbReference type="GO" id="GO:0030425">
    <property type="term" value="C:dendrite"/>
    <property type="evidence" value="ECO:0000314"/>
    <property type="project" value="UniProtKB"/>
</dbReference>
<dbReference type="GO" id="GO:0043025">
    <property type="term" value="C:neuronal cell body"/>
    <property type="evidence" value="ECO:0000314"/>
    <property type="project" value="UniProtKB"/>
</dbReference>
<dbReference type="GO" id="GO:0043204">
    <property type="term" value="C:perikaryon"/>
    <property type="evidence" value="ECO:0007669"/>
    <property type="project" value="UniProtKB-SubCell"/>
</dbReference>
<dbReference type="GO" id="GO:0008017">
    <property type="term" value="F:microtubule binding"/>
    <property type="evidence" value="ECO:0000318"/>
    <property type="project" value="GO_Central"/>
</dbReference>
<dbReference type="GO" id="GO:0035082">
    <property type="term" value="P:axoneme assembly"/>
    <property type="evidence" value="ECO:0000315"/>
    <property type="project" value="UniProtKB"/>
</dbReference>
<dbReference type="GO" id="GO:0006935">
    <property type="term" value="P:chemotaxis"/>
    <property type="evidence" value="ECO:0000315"/>
    <property type="project" value="UniProtKB"/>
</dbReference>
<dbReference type="GO" id="GO:0006972">
    <property type="term" value="P:hyperosmotic response"/>
    <property type="evidence" value="ECO:0000315"/>
    <property type="project" value="WormBase"/>
</dbReference>
<dbReference type="GO" id="GO:0000226">
    <property type="term" value="P:microtubule cytoskeleton organization"/>
    <property type="evidence" value="ECO:0000318"/>
    <property type="project" value="GO_Central"/>
</dbReference>
<dbReference type="GO" id="GO:1905515">
    <property type="term" value="P:non-motile cilium assembly"/>
    <property type="evidence" value="ECO:0000315"/>
    <property type="project" value="UniProtKB"/>
</dbReference>
<dbReference type="GO" id="GO:0007600">
    <property type="term" value="P:sensory perception"/>
    <property type="evidence" value="ECO:0000315"/>
    <property type="project" value="UniProtKB"/>
</dbReference>
<dbReference type="Gene3D" id="1.25.10.10">
    <property type="entry name" value="Leucine-rich Repeat Variant"/>
    <property type="match status" value="4"/>
</dbReference>
<dbReference type="InterPro" id="IPR011989">
    <property type="entry name" value="ARM-like"/>
</dbReference>
<dbReference type="InterPro" id="IPR016024">
    <property type="entry name" value="ARM-type_fold"/>
</dbReference>
<dbReference type="InterPro" id="IPR024395">
    <property type="entry name" value="CLASP_N_dom"/>
</dbReference>
<dbReference type="InterPro" id="IPR034085">
    <property type="entry name" value="TOG"/>
</dbReference>
<dbReference type="PANTHER" id="PTHR21567">
    <property type="entry name" value="CLASP"/>
    <property type="match status" value="1"/>
</dbReference>
<dbReference type="PANTHER" id="PTHR21567:SF87">
    <property type="entry name" value="CRESCERIN-LIKE PROTEIN CHE-12"/>
    <property type="match status" value="1"/>
</dbReference>
<dbReference type="Pfam" id="PF21040">
    <property type="entry name" value="CEP104-like_TOG"/>
    <property type="match status" value="1"/>
</dbReference>
<dbReference type="Pfam" id="PF12348">
    <property type="entry name" value="CLASP_N"/>
    <property type="match status" value="1"/>
</dbReference>
<dbReference type="SMART" id="SM01349">
    <property type="entry name" value="TOG"/>
    <property type="match status" value="3"/>
</dbReference>
<dbReference type="SUPFAM" id="SSF48371">
    <property type="entry name" value="ARM repeat"/>
    <property type="match status" value="2"/>
</dbReference>
<accession>Q17423</accession>
<accession>E9P869</accession>
<accession>E9P870</accession>
<accession>M1ZMI6</accession>
<evidence type="ECO:0000250" key="1">
    <source>
        <dbReference type="UniProtKB" id="Q6A070"/>
    </source>
</evidence>
<evidence type="ECO:0000255" key="2"/>
<evidence type="ECO:0000256" key="3">
    <source>
        <dbReference type="SAM" id="MobiDB-lite"/>
    </source>
</evidence>
<evidence type="ECO:0000269" key="4">
    <source>
    </source>
</evidence>
<evidence type="ECO:0000269" key="5">
    <source>
    </source>
</evidence>
<evidence type="ECO:0000269" key="6">
    <source>
    </source>
</evidence>
<evidence type="ECO:0000303" key="7">
    <source>
    </source>
</evidence>
<evidence type="ECO:0000305" key="8"/>
<evidence type="ECO:0000312" key="9">
    <source>
        <dbReference type="EMBL" id="CAA94880.3"/>
    </source>
</evidence>
<evidence type="ECO:0000312" key="10">
    <source>
        <dbReference type="WormBase" id="B0024.8a"/>
    </source>
</evidence>
<evidence type="ECO:0000312" key="11">
    <source>
        <dbReference type="WormBase" id="B0024.8b"/>
    </source>
</evidence>
<evidence type="ECO:0000312" key="12">
    <source>
        <dbReference type="WormBase" id="B0024.8c"/>
    </source>
</evidence>
<evidence type="ECO:0000312" key="13">
    <source>
        <dbReference type="WormBase" id="B0024.8d"/>
    </source>
</evidence>
<feature type="chain" id="PRO_0000437572" description="Crescerin-like protein che-12">
    <location>
        <begin position="1"/>
        <end position="1282"/>
    </location>
</feature>
<feature type="repeat" description="HEAT 1" evidence="2">
    <location>
        <begin position="59"/>
        <end position="96"/>
    </location>
</feature>
<feature type="repeat" description="HEAT 2" evidence="2">
    <location>
        <begin position="100"/>
        <end position="137"/>
    </location>
</feature>
<feature type="repeat" description="HEAT 3" evidence="2">
    <location>
        <begin position="162"/>
        <end position="209"/>
    </location>
</feature>
<feature type="repeat" description="HEAT 4" evidence="2">
    <location>
        <begin position="261"/>
        <end position="300"/>
    </location>
</feature>
<feature type="repeat" description="HEAT 5" evidence="2">
    <location>
        <begin position="308"/>
        <end position="345"/>
    </location>
</feature>
<feature type="repeat" description="HEAT 6" evidence="2">
    <location>
        <begin position="349"/>
        <end position="386"/>
    </location>
</feature>
<feature type="repeat" description="HEAT 7" evidence="2">
    <location>
        <begin position="388"/>
        <end position="421"/>
    </location>
</feature>
<feature type="repeat" description="HEAT 8" evidence="2">
    <location>
        <begin position="424"/>
        <end position="461"/>
    </location>
</feature>
<feature type="repeat" description="HEAT 9" evidence="2">
    <location>
        <begin position="838"/>
        <end position="875"/>
    </location>
</feature>
<feature type="repeat" description="HEAT 10" evidence="2">
    <location>
        <begin position="879"/>
        <end position="917"/>
    </location>
</feature>
<feature type="repeat" description="HEAT 11" evidence="2">
    <location>
        <begin position="919"/>
        <end position="953"/>
    </location>
</feature>
<feature type="repeat" description="HEAT 12" evidence="2">
    <location>
        <begin position="961"/>
        <end position="998"/>
    </location>
</feature>
<feature type="repeat" description="HEAT 13" evidence="2">
    <location>
        <begin position="1095"/>
        <end position="1132"/>
    </location>
</feature>
<feature type="repeat" description="HEAT 14" evidence="2">
    <location>
        <begin position="1177"/>
        <end position="1214"/>
    </location>
</feature>
<feature type="repeat" description="HEAT 15" evidence="2">
    <location>
        <begin position="1219"/>
        <end position="1258"/>
    </location>
</feature>
<feature type="region of interest" description="TOG 1" evidence="1">
    <location>
        <begin position="33"/>
        <end position="240"/>
    </location>
</feature>
<feature type="region of interest" description="TOG 2" evidence="1">
    <location>
        <begin position="268"/>
        <end position="515"/>
    </location>
</feature>
<feature type="region of interest" description="Disordered" evidence="3">
    <location>
        <begin position="566"/>
        <end position="714"/>
    </location>
</feature>
<feature type="region of interest" description="TOG 3" evidence="1">
    <location>
        <begin position="800"/>
        <end position="1022"/>
    </location>
</feature>
<feature type="region of interest" description="TOG 4" evidence="1">
    <location>
        <begin position="1066"/>
        <end position="1282"/>
    </location>
</feature>
<feature type="compositionally biased region" description="Low complexity" evidence="3">
    <location>
        <begin position="575"/>
        <end position="592"/>
    </location>
</feature>
<feature type="compositionally biased region" description="Low complexity" evidence="3">
    <location>
        <begin position="633"/>
        <end position="644"/>
    </location>
</feature>
<feature type="compositionally biased region" description="Basic and acidic residues" evidence="3">
    <location>
        <begin position="702"/>
        <end position="712"/>
    </location>
</feature>
<feature type="splice variant" id="VSP_058556" description="In isoform d.">
    <original>MTSLFDALSRSNDRLPSPNFLPEDFLELLKSNDFDTKLTTLIRAATIAKREEDWFHKFQKKGELFKCIDKIICDDRWELQHQCIKFLVEAMPTFGSATEYCMCFVMPNLIPKLVSNKVTVRKITHQAIATFLRLKPEALQSFLKMLSNFMPNCNSKSELITELHHILIPELVKSNWTCLVENFTTESNIQGCEDQAGVLMKKLHYFIGNEFWQKIITNLSPEKREVLEQITANVQVEHTESKAGSGVLRASAKPQSGGERRLRFGIVPSLVCALIAEDTDANQRISGLEKMKQVVDQITPEEIARLVPHLHSYLLMLSNVLEDLNFKVVVLALDIVRATGHHLKGHMEAHIQQFVNLVAKHFGNQKSVIKQIIMMTFMELFQNINPKTVGGCLRVFLENKNSRVREEVINIYTASLMTISPSKFNLQPLVNILVPMFHDVKKRVRLAAFEQLSVLAYLLNGKTEIIMKPVRDFEQDQNSRGLTEAVTARIRRQVLPRIRYDGLIEYSTPPMMDSFDLAEAEMSLPSNADLSWIVSNGGVEPDPFERTMSPISLAGNLATIRRNRVIQQQGQAEKPSFSLPQQPAQQASHQAQRLPNGIEKSHETSENSSLDIGQRIVMTRMKSDDSFVRRQGSAASNPNSSTSSWEAPKRPPISPSEKSSISATKKEVNNNHIVKKGNLKSMRARSDTNLSEDHGEEEMENDPPRSFDDRPAKASGQYSFQD</original>
    <variation>MYSQKMSAISSTHLPPIFAHKTQSWLKSDGREYLWSSPN</variation>
    <location>
        <begin position="1"/>
        <end position="722"/>
    </location>
</feature>
<feature type="splice variant" id="VSP_058557" description="In isoform c.">
    <location>
        <begin position="1"/>
        <end position="681"/>
    </location>
</feature>
<feature type="splice variant" id="VSP_058558" description="In isoform b.">
    <original>MTSLFDALSRSNDRLPSPNFLPEDFLELLKSNDFDTKLTTLIRAATIAKREEDWFHKFQKKGELFKCIDKIICDDRWELQHQCIKFLVEAMPTFGSATEYCMCFVMPNLIPKLVSNKVTVRKITHQAIATFLRLKPEALQSFLKMLSNFMPNCNSKSELITELHHILIPELVKSNWTCLVENFTTESNIQGCEDQAGVLMKKLHYFIGNEFWQKIITNLSPEKREVLEQITANVQVEHTESKAGSGVLRASAKPQSGGERRLRFGIVPSLVCALIAEDTDANQRISGLEKMKQVVDQITPEEIARLVPHLHSYLLMLSNVLEDLNFKVVVLALDIVRATGHHLKGHMEAHIQQFVNLVAKHFGNQKSVIKQIIMMTFMELFQNINPKTVGGCLRVFLENKNSRVREEVINIYTASLMTISPSKFNLQPLVNILVPMFHDVKKRVRLAAFEQLSVLAYLLNGKTEIIMKPVRDFEQDQNSRGLTEAVTARIRRQVLPRIRYDGLIEYSTPPMMDSFDLAEAEMSLPSNADLSWIVSNGGVEPDPFERTMSPISLAGNLATIRRNRVIQQQGQAEKPSFSLPQQPAQQASHQAQRLPNGIEKSHETSENSSLDIGQRIVMTRMKSDDSFVRRQGSA</original>
    <variation>MGTTVSRAVSAPNRIYSSTVTPMPMSSNQNNMFMVVNRRMRP</variation>
    <location>
        <begin position="1"/>
        <end position="634"/>
    </location>
</feature>
<feature type="mutagenesis site" description="Disrupts the predicted tubulin binding sites and leads to strongly shortened sensory cilia on ASER neurons; when associated with E-281; E-815 and E-1073." evidence="5">
    <original>F</original>
    <variation>E</variation>
    <location>
        <position position="34"/>
    </location>
</feature>
<feature type="mutagenesis site" description="Disrupts the predicted tubulin binding sites and leads to strongly shortened sensory cilia on ASER neurons; when associated with E-34; E-815 and E-1073." evidence="5">
    <original>A</original>
    <variation>E</variation>
    <location>
        <position position="281"/>
    </location>
</feature>
<feature type="mutagenesis site" description="In oy106; shortens ASK and ASI cilia length. Defects in pheromone-induced dauer formation in response to the ascarosides ascr#2, ascr#3, ascr#5, ascr#8 and icas#9." evidence="6">
    <location>
        <begin position="645"/>
        <end position="1282"/>
    </location>
</feature>
<feature type="mutagenesis site" description="Disrupts the predicted tubulin binding sites and leads to strongly shortened sensory cilia on ASER neurons; when associated with E-34; E-281 and E-1073." evidence="5">
    <original>W</original>
    <variation>E</variation>
    <location>
        <position position="815"/>
    </location>
</feature>
<feature type="mutagenesis site" description="Disrupts the predicted tubulin binding sites and leads to strongly shortened sensory cilia on ASER neurons; when associated with E-34; E-281 and E-815." evidence="5">
    <original>W</original>
    <variation>E</variation>
    <location>
        <position position="1073"/>
    </location>
</feature>
<name>CREC_CAEEL</name>
<sequence length="1282" mass="142983">MTSLFDALSRSNDRLPSPNFLPEDFLELLKSNDFDTKLTTLIRAATIAKREEDWFHKFQKKGELFKCIDKIICDDRWELQHQCIKFLVEAMPTFGSATEYCMCFVMPNLIPKLVSNKVTVRKITHQAIATFLRLKPEALQSFLKMLSNFMPNCNSKSELITELHHILIPELVKSNWTCLVENFTTESNIQGCEDQAGVLMKKLHYFIGNEFWQKIITNLSPEKREVLEQITANVQVEHTESKAGSGVLRASAKPQSGGERRLRFGIVPSLVCALIAEDTDANQRISGLEKMKQVVDQITPEEIARLVPHLHSYLLMLSNVLEDLNFKVVVLALDIVRATGHHLKGHMEAHIQQFVNLVAKHFGNQKSVIKQIIMMTFMELFQNINPKTVGGCLRVFLENKNSRVREEVINIYTASLMTISPSKFNLQPLVNILVPMFHDVKKRVRLAAFEQLSVLAYLLNGKTEIIMKPVRDFEQDQNSRGLTEAVTARIRRQVLPRIRYDGLIEYSTPPMMDSFDLAEAEMSLPSNADLSWIVSNGGVEPDPFERTMSPISLAGNLATIRRNRVIQQQGQAEKPSFSLPQQPAQQASHQAQRLPNGIEKSHETSENSSLDIGQRIVMTRMKSDDSFVRRQGSAASNPNSSTSSWEAPKRPPISPSEKSSISATKKEVNNNHIVKKGNLKSMRARSDTNLSEDHGEEEMENDPPRSFDDRPAKASGQYSFQDFDAAIVPSSMGKKSISHHSLPITSHPPLKHAISQPQKRINNNGTFLRSGQGQRTKSVSKPHRELTAVSKTYSLLDTSNMSVNQALKKMSSDEWADKVDGLNMISTLSETQPRMVADNLKEVIIAILNECKNLRSSVSRVAIVTIGTVAQNLNSKIDSEMEKICAVLLSKSGDVSNAFIRDDATDSLNKLVKAATAGKALQGIILAGAKSKNNTIRSSCANFVYDIITIQGSSAILNNQNALSNVLPVLLQFSRDQSPQVRNPGKQSLCFLSKDPNFDRLMRKNALESEIKAVKDVLANVEKRGGVDSLESTANLSGSLSRIGSTRRVQKKLPDSLQLDLDEIRTELLAAGWERRLTGLQRFEEMCGHASKAVASDTRLIEAFISRLGDTNGKVASCAMETYISTMGSMAKLYSTESNLKAVMNQLAHALTAHLSSKSEEHKHLARTCIQHTIRSIEPVSLLPAMTSATKKSNVKQRPFILTQYCELSKLAYKSKPKQVEVMALPLLWDSVKNSAPDVDNKKATQYLAKTLAKLIGEKQLLDLATSELDPNRKKQLDALIR</sequence>
<reference key="1">
    <citation type="journal article" date="1998" name="Science">
        <title>Genome sequence of the nematode C. elegans: a platform for investigating biology.</title>
        <authorList>
            <consortium name="The C. elegans sequencing consortium"/>
        </authorList>
    </citation>
    <scope>NUCLEOTIDE SEQUENCE [LARGE SCALE GENOMIC DNA]</scope>
    <source>
        <strain>Bristol N2</strain>
    </source>
</reference>
<reference key="2">
    <citation type="journal article" date="2008" name="Genetics">
        <title>The conserved proteins CHE-12 and DYF-11 are required for sensory cilium function in Caenorhabditis elegans.</title>
        <authorList>
            <person name="Bacaj T."/>
            <person name="Lu Y."/>
            <person name="Shaham S."/>
        </authorList>
    </citation>
    <scope>IDENTIFICATION</scope>
    <scope>FUNCTION</scope>
    <scope>SUBCELLULAR LOCATION</scope>
    <scope>TISSUE SPECIFICITY</scope>
</reference>
<reference key="3">
    <citation type="journal article" date="2015" name="Mol. Biol. Cell">
        <title>Crescerin uses a TOG domain array to regulate microtubules in the primary cilium.</title>
        <authorList>
            <person name="Das A."/>
            <person name="Dickinson D.J."/>
            <person name="Wood C.C."/>
            <person name="Goldstein B."/>
            <person name="Slep K.C."/>
        </authorList>
    </citation>
    <scope>DISRUPTION PHENOTYPE</scope>
    <scope>FUNCTION</scope>
    <scope>SUBCELLULAR LOCATION</scope>
    <scope>TISSUE SPECIFICITY</scope>
    <scope>MUTAGENESIS OF PHE-34; ALA-281; TRP-815 AND TRP-1073</scope>
</reference>
<reference key="4">
    <citation type="journal article" date="2016" name="G3 (Bethesda)">
        <title>A Forward Genetic Screen for Molecules Involved in Pheromone-Induced Dauer Formation in Caenorhabditis elegans.</title>
        <authorList>
            <person name="Neal S.J."/>
            <person name="Park J."/>
            <person name="DiTirro D."/>
            <person name="Yoon J."/>
            <person name="Shibuya M."/>
            <person name="Choi W."/>
            <person name="Schroeder F.C."/>
            <person name="Butcher R.A."/>
            <person name="Kim K."/>
            <person name="Sengupta P."/>
        </authorList>
    </citation>
    <scope>FUNCTION</scope>
    <scope>MUTAGENESIS OF 645-TRP--ARG-1282</scope>
</reference>
<proteinExistence type="evidence at protein level"/>
<protein>
    <recommendedName>
        <fullName evidence="8">Crescerin-like protein che-12</fullName>
    </recommendedName>
</protein>
<organism evidence="9">
    <name type="scientific">Caenorhabditis elegans</name>
    <dbReference type="NCBI Taxonomy" id="6239"/>
    <lineage>
        <taxon>Eukaryota</taxon>
        <taxon>Metazoa</taxon>
        <taxon>Ecdysozoa</taxon>
        <taxon>Nematoda</taxon>
        <taxon>Chromadorea</taxon>
        <taxon>Rhabditida</taxon>
        <taxon>Rhabditina</taxon>
        <taxon>Rhabditomorpha</taxon>
        <taxon>Rhabditoidea</taxon>
        <taxon>Rhabditidae</taxon>
        <taxon>Peloderinae</taxon>
        <taxon>Caenorhabditis</taxon>
    </lineage>
</organism>
<keyword id="KW-0025">Alternative splicing</keyword>
<keyword id="KW-0966">Cell projection</keyword>
<keyword id="KW-0145">Chemotaxis</keyword>
<keyword id="KW-0970">Cilium biogenesis/degradation</keyword>
<keyword id="KW-1185">Reference proteome</keyword>
<keyword id="KW-0677">Repeat</keyword>